<keyword id="KW-0067">ATP-binding</keyword>
<keyword id="KW-0143">Chaperone</keyword>
<keyword id="KW-0963">Cytoplasm</keyword>
<keyword id="KW-0547">Nucleotide-binding</keyword>
<keyword id="KW-1185">Reference proteome</keyword>
<sequence>MPPKVSASNATFKNREKPQEVRKANIIAARAVADAIRTSLGPKGMDKMIKTARGEILISNDGHTILKQMAILHPVAKMLVEVSAAQDSEAGDGTTSVVILTGALLGAAEKLLAKGIHPTIIAESFQRAGQRAVEVLLGMSKRISLQDRAELVRAASTSLSSKIVSQYSTFLAPLAVDCVLSLTNEASTNVDLNDIRLVKKVGGTIDDTEMVDGVVLTQNIVKSAGGPVRMEKAKIGLIQFQISPPKPDTENNIVVNDYRQMDKILKEERAYLLKICKKIKKAKCNVLLIQKSILRDAVNELALHFLSKLNIVVIKDVERDEIEFLSKSLGCKPISDVELFTEDRLGSADLVEEIDSDGTKIVKITGIKTGNAKPTVSCIVRGANNVVLDETERSLHDALCVIRCLVKERALIAGGGAPEIEVSRTIMRESRAMQGVEAFVWQEFAEALEVIPTTLAENAGLNSIKVVTELRSRHESGETNAGISVRRSGTTNTYDEHILQPVLVSTSAITLAAECVKSILRIDDITFSR</sequence>
<accession>Q75A36</accession>
<protein>
    <recommendedName>
        <fullName>T-complex protein 1 subunit delta</fullName>
        <shortName>TCP-1-delta</shortName>
    </recommendedName>
    <alternativeName>
        <fullName>CCT-delta</fullName>
    </alternativeName>
</protein>
<gene>
    <name type="primary">CCT4</name>
    <name type="ordered locus">ADR083W</name>
</gene>
<evidence type="ECO:0000250" key="1"/>
<evidence type="ECO:0000305" key="2"/>
<proteinExistence type="inferred from homology"/>
<reference key="1">
    <citation type="journal article" date="2004" name="Science">
        <title>The Ashbya gossypii genome as a tool for mapping the ancient Saccharomyces cerevisiae genome.</title>
        <authorList>
            <person name="Dietrich F.S."/>
            <person name="Voegeli S."/>
            <person name="Brachat S."/>
            <person name="Lerch A."/>
            <person name="Gates K."/>
            <person name="Steiner S."/>
            <person name="Mohr C."/>
            <person name="Poehlmann R."/>
            <person name="Luedi P."/>
            <person name="Choi S."/>
            <person name="Wing R.A."/>
            <person name="Flavier A."/>
            <person name="Gaffney T.D."/>
            <person name="Philippsen P."/>
        </authorList>
    </citation>
    <scope>NUCLEOTIDE SEQUENCE [LARGE SCALE GENOMIC DNA]</scope>
    <source>
        <strain>ATCC 10895 / CBS 109.51 / FGSC 9923 / NRRL Y-1056</strain>
    </source>
</reference>
<reference key="2">
    <citation type="journal article" date="2013" name="G3 (Bethesda)">
        <title>Genomes of Ashbya fungi isolated from insects reveal four mating-type loci, numerous translocations, lack of transposons, and distinct gene duplications.</title>
        <authorList>
            <person name="Dietrich F.S."/>
            <person name="Voegeli S."/>
            <person name="Kuo S."/>
            <person name="Philippsen P."/>
        </authorList>
    </citation>
    <scope>GENOME REANNOTATION</scope>
    <source>
        <strain>ATCC 10895 / CBS 109.51 / FGSC 9923 / NRRL Y-1056</strain>
    </source>
</reference>
<feature type="chain" id="PRO_0000128339" description="T-complex protein 1 subunit delta">
    <location>
        <begin position="1"/>
        <end position="529"/>
    </location>
</feature>
<dbReference type="EMBL" id="AE016817">
    <property type="protein sequence ID" value="AAS52003.1"/>
    <property type="molecule type" value="Genomic_DNA"/>
</dbReference>
<dbReference type="RefSeq" id="NP_984179.1">
    <property type="nucleotide sequence ID" value="NM_209532.1"/>
</dbReference>
<dbReference type="SMR" id="Q75A36"/>
<dbReference type="FunCoup" id="Q75A36">
    <property type="interactions" value="1516"/>
</dbReference>
<dbReference type="STRING" id="284811.Q75A36"/>
<dbReference type="EnsemblFungi" id="AAS52003">
    <property type="protein sequence ID" value="AAS52003"/>
    <property type="gene ID" value="AGOS_ADR083W"/>
</dbReference>
<dbReference type="GeneID" id="4620328"/>
<dbReference type="KEGG" id="ago:AGOS_ADR083W"/>
<dbReference type="eggNOG" id="KOG0358">
    <property type="taxonomic scope" value="Eukaryota"/>
</dbReference>
<dbReference type="HOGENOM" id="CLU_008891_9_1_1"/>
<dbReference type="InParanoid" id="Q75A36"/>
<dbReference type="OMA" id="HPAANMI"/>
<dbReference type="OrthoDB" id="10248520at2759"/>
<dbReference type="Proteomes" id="UP000000591">
    <property type="component" value="Chromosome IV"/>
</dbReference>
<dbReference type="GO" id="GO:0005832">
    <property type="term" value="C:chaperonin-containing T-complex"/>
    <property type="evidence" value="ECO:0000318"/>
    <property type="project" value="GO_Central"/>
</dbReference>
<dbReference type="GO" id="GO:0005524">
    <property type="term" value="F:ATP binding"/>
    <property type="evidence" value="ECO:0007669"/>
    <property type="project" value="UniProtKB-KW"/>
</dbReference>
<dbReference type="GO" id="GO:0016887">
    <property type="term" value="F:ATP hydrolysis activity"/>
    <property type="evidence" value="ECO:0007669"/>
    <property type="project" value="InterPro"/>
</dbReference>
<dbReference type="GO" id="GO:0140662">
    <property type="term" value="F:ATP-dependent protein folding chaperone"/>
    <property type="evidence" value="ECO:0007669"/>
    <property type="project" value="InterPro"/>
</dbReference>
<dbReference type="GO" id="GO:0051082">
    <property type="term" value="F:unfolded protein binding"/>
    <property type="evidence" value="ECO:0000318"/>
    <property type="project" value="GO_Central"/>
</dbReference>
<dbReference type="GO" id="GO:0051086">
    <property type="term" value="P:chaperone mediated protein folding independent of cofactor"/>
    <property type="evidence" value="ECO:0007669"/>
    <property type="project" value="EnsemblFungi"/>
</dbReference>
<dbReference type="GO" id="GO:0006457">
    <property type="term" value="P:protein folding"/>
    <property type="evidence" value="ECO:0000318"/>
    <property type="project" value="GO_Central"/>
</dbReference>
<dbReference type="CDD" id="cd03338">
    <property type="entry name" value="TCP1_delta"/>
    <property type="match status" value="1"/>
</dbReference>
<dbReference type="FunFam" id="3.50.7.10:FF:000010">
    <property type="entry name" value="T-complex protein 1 subunit delta"/>
    <property type="match status" value="1"/>
</dbReference>
<dbReference type="Gene3D" id="3.50.7.10">
    <property type="entry name" value="GroEL"/>
    <property type="match status" value="1"/>
</dbReference>
<dbReference type="Gene3D" id="1.10.560.10">
    <property type="entry name" value="GroEL-like equatorial domain"/>
    <property type="match status" value="1"/>
</dbReference>
<dbReference type="Gene3D" id="3.30.260.10">
    <property type="entry name" value="TCP-1-like chaperonin intermediate domain"/>
    <property type="match status" value="1"/>
</dbReference>
<dbReference type="InterPro" id="IPR012717">
    <property type="entry name" value="Chap_CCT_delta"/>
</dbReference>
<dbReference type="InterPro" id="IPR017998">
    <property type="entry name" value="Chaperone_TCP-1"/>
</dbReference>
<dbReference type="InterPro" id="IPR002194">
    <property type="entry name" value="Chaperonin_TCP-1_CS"/>
</dbReference>
<dbReference type="InterPro" id="IPR002423">
    <property type="entry name" value="Cpn60/GroEL/TCP-1"/>
</dbReference>
<dbReference type="InterPro" id="IPR027409">
    <property type="entry name" value="GroEL-like_apical_dom_sf"/>
</dbReference>
<dbReference type="InterPro" id="IPR027413">
    <property type="entry name" value="GROEL-like_equatorial_sf"/>
</dbReference>
<dbReference type="InterPro" id="IPR027410">
    <property type="entry name" value="TCP-1-like_intermed_sf"/>
</dbReference>
<dbReference type="InterPro" id="IPR053374">
    <property type="entry name" value="TCP-1_chaperonin"/>
</dbReference>
<dbReference type="InterPro" id="IPR054827">
    <property type="entry name" value="thermosome_alpha"/>
</dbReference>
<dbReference type="NCBIfam" id="TIGR02342">
    <property type="entry name" value="chap_CCT_delta"/>
    <property type="match status" value="1"/>
</dbReference>
<dbReference type="NCBIfam" id="NF041082">
    <property type="entry name" value="thermosome_alpha"/>
    <property type="match status" value="1"/>
</dbReference>
<dbReference type="NCBIfam" id="NF041083">
    <property type="entry name" value="thermosome_beta"/>
    <property type="match status" value="1"/>
</dbReference>
<dbReference type="PANTHER" id="PTHR11353">
    <property type="entry name" value="CHAPERONIN"/>
    <property type="match status" value="1"/>
</dbReference>
<dbReference type="Pfam" id="PF00118">
    <property type="entry name" value="Cpn60_TCP1"/>
    <property type="match status" value="1"/>
</dbReference>
<dbReference type="PRINTS" id="PR00304">
    <property type="entry name" value="TCOMPLEXTCP1"/>
</dbReference>
<dbReference type="SUPFAM" id="SSF52029">
    <property type="entry name" value="GroEL apical domain-like"/>
    <property type="match status" value="1"/>
</dbReference>
<dbReference type="SUPFAM" id="SSF48592">
    <property type="entry name" value="GroEL equatorial domain-like"/>
    <property type="match status" value="1"/>
</dbReference>
<dbReference type="SUPFAM" id="SSF54849">
    <property type="entry name" value="GroEL-intermediate domain like"/>
    <property type="match status" value="1"/>
</dbReference>
<dbReference type="PROSITE" id="PS00750">
    <property type="entry name" value="TCP1_1"/>
    <property type="match status" value="1"/>
</dbReference>
<dbReference type="PROSITE" id="PS00751">
    <property type="entry name" value="TCP1_2"/>
    <property type="match status" value="1"/>
</dbReference>
<dbReference type="PROSITE" id="PS00995">
    <property type="entry name" value="TCP1_3"/>
    <property type="match status" value="1"/>
</dbReference>
<organism>
    <name type="scientific">Eremothecium gossypii (strain ATCC 10895 / CBS 109.51 / FGSC 9923 / NRRL Y-1056)</name>
    <name type="common">Yeast</name>
    <name type="synonym">Ashbya gossypii</name>
    <dbReference type="NCBI Taxonomy" id="284811"/>
    <lineage>
        <taxon>Eukaryota</taxon>
        <taxon>Fungi</taxon>
        <taxon>Dikarya</taxon>
        <taxon>Ascomycota</taxon>
        <taxon>Saccharomycotina</taxon>
        <taxon>Saccharomycetes</taxon>
        <taxon>Saccharomycetales</taxon>
        <taxon>Saccharomycetaceae</taxon>
        <taxon>Eremothecium</taxon>
    </lineage>
</organism>
<name>TCPD_EREGS</name>
<comment type="function">
    <text evidence="1">Molecular chaperone; assists the folding of proteins upon ATP hydrolysis. Known to play a role, in vitro, in the folding of actin and tubulin (By similarity).</text>
</comment>
<comment type="subunit">
    <text evidence="2">Heterooligomeric complex of about 850 to 900 kDa that forms two stacked rings, 12 to 16 nm in diameter.</text>
</comment>
<comment type="subcellular location">
    <subcellularLocation>
        <location evidence="2">Cytoplasm</location>
    </subcellularLocation>
</comment>
<comment type="similarity">
    <text evidence="2">Belongs to the TCP-1 chaperonin family.</text>
</comment>